<feature type="chain" id="PRO_0000242615" description="UDP-N-acetylmuramate--L-alanine ligase">
    <location>
        <begin position="1"/>
        <end position="536"/>
    </location>
</feature>
<feature type="binding site" evidence="1">
    <location>
        <begin position="133"/>
        <end position="139"/>
    </location>
    <ligand>
        <name>ATP</name>
        <dbReference type="ChEBI" id="CHEBI:30616"/>
    </ligand>
</feature>
<proteinExistence type="inferred from homology"/>
<keyword id="KW-0067">ATP-binding</keyword>
<keyword id="KW-0131">Cell cycle</keyword>
<keyword id="KW-0132">Cell division</keyword>
<keyword id="KW-0133">Cell shape</keyword>
<keyword id="KW-0961">Cell wall biogenesis/degradation</keyword>
<keyword id="KW-0963">Cytoplasm</keyword>
<keyword id="KW-0436">Ligase</keyword>
<keyword id="KW-0547">Nucleotide-binding</keyword>
<keyword id="KW-0573">Peptidoglycan synthesis</keyword>
<keyword id="KW-1185">Reference proteome</keyword>
<dbReference type="EC" id="6.3.2.8" evidence="1"/>
<dbReference type="EMBL" id="AE017321">
    <property type="protein sequence ID" value="AAW70709.1"/>
    <property type="status" value="ALT_INIT"/>
    <property type="molecule type" value="Genomic_DNA"/>
</dbReference>
<dbReference type="RefSeq" id="WP_041571373.1">
    <property type="nucleotide sequence ID" value="NC_006833.1"/>
</dbReference>
<dbReference type="SMR" id="Q5GTG5"/>
<dbReference type="STRING" id="292805.Wbm0118"/>
<dbReference type="KEGG" id="wbm:Wbm0118"/>
<dbReference type="eggNOG" id="COG0773">
    <property type="taxonomic scope" value="Bacteria"/>
</dbReference>
<dbReference type="HOGENOM" id="CLU_028104_2_2_5"/>
<dbReference type="UniPathway" id="UPA00219"/>
<dbReference type="Proteomes" id="UP000000534">
    <property type="component" value="Chromosome"/>
</dbReference>
<dbReference type="GO" id="GO:0005737">
    <property type="term" value="C:cytoplasm"/>
    <property type="evidence" value="ECO:0007669"/>
    <property type="project" value="UniProtKB-SubCell"/>
</dbReference>
<dbReference type="GO" id="GO:0005524">
    <property type="term" value="F:ATP binding"/>
    <property type="evidence" value="ECO:0007669"/>
    <property type="project" value="UniProtKB-UniRule"/>
</dbReference>
<dbReference type="GO" id="GO:0008763">
    <property type="term" value="F:UDP-N-acetylmuramate-L-alanine ligase activity"/>
    <property type="evidence" value="ECO:0007669"/>
    <property type="project" value="UniProtKB-UniRule"/>
</dbReference>
<dbReference type="GO" id="GO:0051301">
    <property type="term" value="P:cell division"/>
    <property type="evidence" value="ECO:0007669"/>
    <property type="project" value="UniProtKB-KW"/>
</dbReference>
<dbReference type="GO" id="GO:0071555">
    <property type="term" value="P:cell wall organization"/>
    <property type="evidence" value="ECO:0007669"/>
    <property type="project" value="UniProtKB-KW"/>
</dbReference>
<dbReference type="GO" id="GO:0009252">
    <property type="term" value="P:peptidoglycan biosynthetic process"/>
    <property type="evidence" value="ECO:0007669"/>
    <property type="project" value="UniProtKB-UniRule"/>
</dbReference>
<dbReference type="GO" id="GO:0008360">
    <property type="term" value="P:regulation of cell shape"/>
    <property type="evidence" value="ECO:0007669"/>
    <property type="project" value="UniProtKB-KW"/>
</dbReference>
<dbReference type="Gene3D" id="3.90.190.20">
    <property type="entry name" value="Mur ligase, C-terminal domain"/>
    <property type="match status" value="1"/>
</dbReference>
<dbReference type="Gene3D" id="3.40.1190.10">
    <property type="entry name" value="Mur-like, catalytic domain"/>
    <property type="match status" value="1"/>
</dbReference>
<dbReference type="Gene3D" id="3.40.50.720">
    <property type="entry name" value="NAD(P)-binding Rossmann-like Domain"/>
    <property type="match status" value="1"/>
</dbReference>
<dbReference type="HAMAP" id="MF_00046">
    <property type="entry name" value="MurC"/>
    <property type="match status" value="1"/>
</dbReference>
<dbReference type="InterPro" id="IPR036565">
    <property type="entry name" value="Mur-like_cat_sf"/>
</dbReference>
<dbReference type="InterPro" id="IPR004101">
    <property type="entry name" value="Mur_ligase_C"/>
</dbReference>
<dbReference type="InterPro" id="IPR036615">
    <property type="entry name" value="Mur_ligase_C_dom_sf"/>
</dbReference>
<dbReference type="InterPro" id="IPR013221">
    <property type="entry name" value="Mur_ligase_cen"/>
</dbReference>
<dbReference type="InterPro" id="IPR000713">
    <property type="entry name" value="Mur_ligase_N"/>
</dbReference>
<dbReference type="InterPro" id="IPR050061">
    <property type="entry name" value="MurCDEF_pg_biosynth"/>
</dbReference>
<dbReference type="InterPro" id="IPR005758">
    <property type="entry name" value="UDP-N-AcMur_Ala_ligase_MurC"/>
</dbReference>
<dbReference type="PANTHER" id="PTHR43445:SF3">
    <property type="entry name" value="UDP-N-ACETYLMURAMATE--L-ALANINE LIGASE"/>
    <property type="match status" value="1"/>
</dbReference>
<dbReference type="PANTHER" id="PTHR43445">
    <property type="entry name" value="UDP-N-ACETYLMURAMATE--L-ALANINE LIGASE-RELATED"/>
    <property type="match status" value="1"/>
</dbReference>
<dbReference type="Pfam" id="PF01225">
    <property type="entry name" value="Mur_ligase"/>
    <property type="match status" value="1"/>
</dbReference>
<dbReference type="Pfam" id="PF02875">
    <property type="entry name" value="Mur_ligase_C"/>
    <property type="match status" value="1"/>
</dbReference>
<dbReference type="Pfam" id="PF08245">
    <property type="entry name" value="Mur_ligase_M"/>
    <property type="match status" value="1"/>
</dbReference>
<dbReference type="SUPFAM" id="SSF51984">
    <property type="entry name" value="MurCD N-terminal domain"/>
    <property type="match status" value="1"/>
</dbReference>
<dbReference type="SUPFAM" id="SSF53623">
    <property type="entry name" value="MurD-like peptide ligases, catalytic domain"/>
    <property type="match status" value="1"/>
</dbReference>
<dbReference type="SUPFAM" id="SSF53244">
    <property type="entry name" value="MurD-like peptide ligases, peptide-binding domain"/>
    <property type="match status" value="1"/>
</dbReference>
<gene>
    <name evidence="1" type="primary">murC</name>
    <name type="ordered locus">Wbm0118</name>
</gene>
<comment type="function">
    <text evidence="1">Cell wall formation.</text>
</comment>
<comment type="catalytic activity">
    <reaction evidence="1">
        <text>UDP-N-acetyl-alpha-D-muramate + L-alanine + ATP = UDP-N-acetyl-alpha-D-muramoyl-L-alanine + ADP + phosphate + H(+)</text>
        <dbReference type="Rhea" id="RHEA:23372"/>
        <dbReference type="ChEBI" id="CHEBI:15378"/>
        <dbReference type="ChEBI" id="CHEBI:30616"/>
        <dbReference type="ChEBI" id="CHEBI:43474"/>
        <dbReference type="ChEBI" id="CHEBI:57972"/>
        <dbReference type="ChEBI" id="CHEBI:70757"/>
        <dbReference type="ChEBI" id="CHEBI:83898"/>
        <dbReference type="ChEBI" id="CHEBI:456216"/>
        <dbReference type="EC" id="6.3.2.8"/>
    </reaction>
</comment>
<comment type="pathway">
    <text evidence="1">Cell wall biogenesis; peptidoglycan biosynthesis.</text>
</comment>
<comment type="subcellular location">
    <subcellularLocation>
        <location evidence="1">Cytoplasm</location>
    </subcellularLocation>
</comment>
<comment type="similarity">
    <text evidence="1">Belongs to the MurCDEF family.</text>
</comment>
<comment type="sequence caution" evidence="2">
    <conflict type="erroneous initiation">
        <sequence resource="EMBL-CDS" id="AAW70709"/>
    </conflict>
</comment>
<sequence length="536" mass="58478">MRILNYTIINLVISKSLLLNMNGIKKGIIHIIGIGGIGMSAIAEILHNSNYKVQGSDAQSNNNVDRLQKLGIEIYIGHNANNIKQAQVVVYSSAIKSDNVELVAARNNNKTILHRSGILAEIMKDKYVIAVSGSSGKTTTTAMIASIFDHSNTDATVIVGGILNSYQNNSKLGKSDILLIEADESDETMLKIPANIAVITSINNDHIDHYGTFDNIKNAFSQFINSADFAILPDSVGINDSESVSIKFGFEGVYPFVIQSPFVVPVHDIGIKKKKSASCSIKASNVKANNIRQHNNSIEFDVLIDGCSIDRSHWIPASCTETTAVLPLSSTQITSLRSRIIKNVVLSNAIGMHKVSNALAAISVAIKLGINDVDIKKGLLEFKGVARRFSLVADIKDVKLIEDYAHHPSEIQATLTAARSITKGKIIGIIEPFRFARIRNFFDEFIRIFMMFDYVILVPVHPPEDKPILGCRIDDIQEALISNGFNNVKIMNDALLISNFISDSTNSGDIVLFIGAGINVARLARETVVFMSGVEI</sequence>
<protein>
    <recommendedName>
        <fullName evidence="1">UDP-N-acetylmuramate--L-alanine ligase</fullName>
        <ecNumber evidence="1">6.3.2.8</ecNumber>
    </recommendedName>
    <alternativeName>
        <fullName evidence="1">UDP-N-acetylmuramoyl-L-alanine synthetase</fullName>
    </alternativeName>
</protein>
<accession>Q5GTG5</accession>
<organism>
    <name type="scientific">Wolbachia sp. subsp. Brugia malayi (strain TRS)</name>
    <dbReference type="NCBI Taxonomy" id="292805"/>
    <lineage>
        <taxon>Bacteria</taxon>
        <taxon>Pseudomonadati</taxon>
        <taxon>Pseudomonadota</taxon>
        <taxon>Alphaproteobacteria</taxon>
        <taxon>Rickettsiales</taxon>
        <taxon>Anaplasmataceae</taxon>
        <taxon>Wolbachieae</taxon>
        <taxon>Wolbachia</taxon>
    </lineage>
</organism>
<reference key="1">
    <citation type="journal article" date="2005" name="PLoS Biol.">
        <title>The Wolbachia genome of Brugia malayi: endosymbiont evolution within a human pathogenic nematode.</title>
        <authorList>
            <person name="Foster J."/>
            <person name="Ganatra M."/>
            <person name="Kamal I."/>
            <person name="Ware J."/>
            <person name="Makarova K."/>
            <person name="Ivanova N."/>
            <person name="Bhattacharyya A."/>
            <person name="Kapatral V."/>
            <person name="Kumar S."/>
            <person name="Posfai J."/>
            <person name="Vincze T."/>
            <person name="Ingram J."/>
            <person name="Moran L."/>
            <person name="Lapidus A."/>
            <person name="Omelchenko M."/>
            <person name="Kyrpides N."/>
            <person name="Ghedin E."/>
            <person name="Wang S."/>
            <person name="Goltsman E."/>
            <person name="Joukov V."/>
            <person name="Ostrovskaya O."/>
            <person name="Tsukerman K."/>
            <person name="Mazur M."/>
            <person name="Comb D."/>
            <person name="Koonin E."/>
            <person name="Slatko B."/>
        </authorList>
    </citation>
    <scope>NUCLEOTIDE SEQUENCE [LARGE SCALE GENOMIC DNA]</scope>
    <source>
        <strain>TRS</strain>
    </source>
</reference>
<evidence type="ECO:0000255" key="1">
    <source>
        <dbReference type="HAMAP-Rule" id="MF_00046"/>
    </source>
</evidence>
<evidence type="ECO:0000305" key="2"/>
<name>MURC_WOLTR</name>